<feature type="chain" id="PRO_1000118663" description="Diaminopimelate epimerase">
    <location>
        <begin position="1"/>
        <end position="288"/>
    </location>
</feature>
<feature type="active site" description="Proton donor" evidence="1">
    <location>
        <position position="76"/>
    </location>
</feature>
<feature type="active site" description="Proton acceptor" evidence="1">
    <location>
        <position position="226"/>
    </location>
</feature>
<feature type="binding site" evidence="1">
    <location>
        <position position="14"/>
    </location>
    <ligand>
        <name>substrate</name>
    </ligand>
</feature>
<feature type="binding site" evidence="1">
    <location>
        <position position="67"/>
    </location>
    <ligand>
        <name>substrate</name>
    </ligand>
</feature>
<feature type="binding site" evidence="1">
    <location>
        <begin position="77"/>
        <end position="78"/>
    </location>
    <ligand>
        <name>substrate</name>
    </ligand>
</feature>
<feature type="binding site" evidence="1">
    <location>
        <position position="166"/>
    </location>
    <ligand>
        <name>substrate</name>
    </ligand>
</feature>
<feature type="binding site" evidence="1">
    <location>
        <position position="199"/>
    </location>
    <ligand>
        <name>substrate</name>
    </ligand>
</feature>
<feature type="binding site" evidence="1">
    <location>
        <begin position="217"/>
        <end position="218"/>
    </location>
    <ligand>
        <name>substrate</name>
    </ligand>
</feature>
<feature type="binding site" evidence="1">
    <location>
        <begin position="227"/>
        <end position="228"/>
    </location>
    <ligand>
        <name>substrate</name>
    </ligand>
</feature>
<feature type="site" description="Could be important to modulate the pK values of the two catalytic cysteine residues" evidence="1">
    <location>
        <position position="168"/>
    </location>
</feature>
<feature type="site" description="Could be important to modulate the pK values of the two catalytic cysteine residues" evidence="1">
    <location>
        <position position="217"/>
    </location>
</feature>
<gene>
    <name evidence="1" type="primary">dapF</name>
    <name type="ordered locus">BCB4264_A5076</name>
</gene>
<comment type="function">
    <text evidence="1">Catalyzes the stereoinversion of LL-2,6-diaminopimelate (L,L-DAP) to meso-diaminopimelate (meso-DAP), a precursor of L-lysine and an essential component of the bacterial peptidoglycan.</text>
</comment>
<comment type="catalytic activity">
    <reaction evidence="1">
        <text>(2S,6S)-2,6-diaminopimelate = meso-2,6-diaminopimelate</text>
        <dbReference type="Rhea" id="RHEA:15393"/>
        <dbReference type="ChEBI" id="CHEBI:57609"/>
        <dbReference type="ChEBI" id="CHEBI:57791"/>
        <dbReference type="EC" id="5.1.1.7"/>
    </reaction>
</comment>
<comment type="pathway">
    <text evidence="1">Amino-acid biosynthesis; L-lysine biosynthesis via DAP pathway; DL-2,6-diaminopimelate from LL-2,6-diaminopimelate: step 1/1.</text>
</comment>
<comment type="subunit">
    <text evidence="1">Homodimer.</text>
</comment>
<comment type="subcellular location">
    <subcellularLocation>
        <location evidence="1">Cytoplasm</location>
    </subcellularLocation>
</comment>
<comment type="similarity">
    <text evidence="1">Belongs to the diaminopimelate epimerase family.</text>
</comment>
<reference key="1">
    <citation type="submission" date="2008-10" db="EMBL/GenBank/DDBJ databases">
        <title>Genome sequence of Bacillus cereus B4264.</title>
        <authorList>
            <person name="Dodson R.J."/>
            <person name="Durkin A.S."/>
            <person name="Rosovitz M.J."/>
            <person name="Rasko D.A."/>
            <person name="Hoffmaster A."/>
            <person name="Ravel J."/>
            <person name="Sutton G."/>
        </authorList>
    </citation>
    <scope>NUCLEOTIDE SEQUENCE [LARGE SCALE GENOMIC DNA]</scope>
    <source>
        <strain>B4264</strain>
    </source>
</reference>
<name>DAPF_BACC4</name>
<accession>B7HBI0</accession>
<evidence type="ECO:0000255" key="1">
    <source>
        <dbReference type="HAMAP-Rule" id="MF_00197"/>
    </source>
</evidence>
<keyword id="KW-0028">Amino-acid biosynthesis</keyword>
<keyword id="KW-0963">Cytoplasm</keyword>
<keyword id="KW-0413">Isomerase</keyword>
<keyword id="KW-0457">Lysine biosynthesis</keyword>
<proteinExistence type="inferred from homology"/>
<protein>
    <recommendedName>
        <fullName evidence="1">Diaminopimelate epimerase</fullName>
        <shortName evidence="1">DAP epimerase</shortName>
        <ecNumber evidence="1">5.1.1.7</ecNumber>
    </recommendedName>
    <alternativeName>
        <fullName evidence="1">PLP-independent amino acid racemase</fullName>
    </alternativeName>
</protein>
<dbReference type="EC" id="5.1.1.7" evidence="1"/>
<dbReference type="EMBL" id="CP001176">
    <property type="protein sequence ID" value="ACK61433.1"/>
    <property type="molecule type" value="Genomic_DNA"/>
</dbReference>
<dbReference type="RefSeq" id="WP_000077396.1">
    <property type="nucleotide sequence ID" value="NZ_VEHB01000013.1"/>
</dbReference>
<dbReference type="SMR" id="B7HBI0"/>
<dbReference type="KEGG" id="bcb:BCB4264_A5076"/>
<dbReference type="HOGENOM" id="CLU_053306_3_0_9"/>
<dbReference type="UniPathway" id="UPA00034">
    <property type="reaction ID" value="UER00025"/>
</dbReference>
<dbReference type="Proteomes" id="UP000007096">
    <property type="component" value="Chromosome"/>
</dbReference>
<dbReference type="GO" id="GO:0005829">
    <property type="term" value="C:cytosol"/>
    <property type="evidence" value="ECO:0007669"/>
    <property type="project" value="TreeGrafter"/>
</dbReference>
<dbReference type="GO" id="GO:0008837">
    <property type="term" value="F:diaminopimelate epimerase activity"/>
    <property type="evidence" value="ECO:0007669"/>
    <property type="project" value="UniProtKB-UniRule"/>
</dbReference>
<dbReference type="GO" id="GO:0009089">
    <property type="term" value="P:lysine biosynthetic process via diaminopimelate"/>
    <property type="evidence" value="ECO:0007669"/>
    <property type="project" value="UniProtKB-UniRule"/>
</dbReference>
<dbReference type="FunFam" id="3.10.310.10:FF:000004">
    <property type="entry name" value="Diaminopimelate epimerase"/>
    <property type="match status" value="1"/>
</dbReference>
<dbReference type="FunFam" id="3.10.310.10:FF:000006">
    <property type="entry name" value="Diaminopimelate epimerase"/>
    <property type="match status" value="1"/>
</dbReference>
<dbReference type="Gene3D" id="3.10.310.10">
    <property type="entry name" value="Diaminopimelate Epimerase, Chain A, domain 1"/>
    <property type="match status" value="2"/>
</dbReference>
<dbReference type="HAMAP" id="MF_00197">
    <property type="entry name" value="DAP_epimerase"/>
    <property type="match status" value="1"/>
</dbReference>
<dbReference type="InterPro" id="IPR018510">
    <property type="entry name" value="DAP_epimerase_AS"/>
</dbReference>
<dbReference type="InterPro" id="IPR001653">
    <property type="entry name" value="DAP_epimerase_DapF"/>
</dbReference>
<dbReference type="NCBIfam" id="TIGR00652">
    <property type="entry name" value="DapF"/>
    <property type="match status" value="1"/>
</dbReference>
<dbReference type="PANTHER" id="PTHR31689:SF0">
    <property type="entry name" value="DIAMINOPIMELATE EPIMERASE"/>
    <property type="match status" value="1"/>
</dbReference>
<dbReference type="PANTHER" id="PTHR31689">
    <property type="entry name" value="DIAMINOPIMELATE EPIMERASE, CHLOROPLASTIC"/>
    <property type="match status" value="1"/>
</dbReference>
<dbReference type="Pfam" id="PF01678">
    <property type="entry name" value="DAP_epimerase"/>
    <property type="match status" value="2"/>
</dbReference>
<dbReference type="SUPFAM" id="SSF54506">
    <property type="entry name" value="Diaminopimelate epimerase-like"/>
    <property type="match status" value="1"/>
</dbReference>
<dbReference type="PROSITE" id="PS01326">
    <property type="entry name" value="DAP_EPIMERASE"/>
    <property type="match status" value="1"/>
</dbReference>
<organism>
    <name type="scientific">Bacillus cereus (strain B4264)</name>
    <dbReference type="NCBI Taxonomy" id="405532"/>
    <lineage>
        <taxon>Bacteria</taxon>
        <taxon>Bacillati</taxon>
        <taxon>Bacillota</taxon>
        <taxon>Bacilli</taxon>
        <taxon>Bacillales</taxon>
        <taxon>Bacillaceae</taxon>
        <taxon>Bacillus</taxon>
        <taxon>Bacillus cereus group</taxon>
    </lineage>
</organism>
<sequence>MSQFSFTKMHGLGNSYIYVNMFEEQIPEEDLALVAEKVSNINTGIGADGMILICPSDVAPVKMRMFNNDGSEGKSCGNGLRCVAKYAYEHKLVEETVFTIETLAGIVTAEVTVEDGVVTLAKIDMGAPRLTRAEIPMLGEGETPFIRENFLYNNHRYAFTAVSMGNPHAVIFVDDVEKAPLTTLGPVLETHEMFPERVNVEFIEILNDDEMNFRVWERGSGVTQACGTGACAAVVAAILNGKMERGKEITVHLAGGDLMIAWTEEGNVLMKGPAEVICRGVYEYKIEA</sequence>